<organism>
    <name type="scientific">Homo sapiens</name>
    <name type="common">Human</name>
    <dbReference type="NCBI Taxonomy" id="9606"/>
    <lineage>
        <taxon>Eukaryota</taxon>
        <taxon>Metazoa</taxon>
        <taxon>Chordata</taxon>
        <taxon>Craniata</taxon>
        <taxon>Vertebrata</taxon>
        <taxon>Euteleostomi</taxon>
        <taxon>Mammalia</taxon>
        <taxon>Eutheria</taxon>
        <taxon>Euarchontoglires</taxon>
        <taxon>Primates</taxon>
        <taxon>Haplorrhini</taxon>
        <taxon>Catarrhini</taxon>
        <taxon>Hominidae</taxon>
        <taxon>Homo</taxon>
    </lineage>
</organism>
<gene>
    <name type="primary">FGR</name>
    <name type="synonym">SRC2</name>
</gene>
<name>FGR_HUMAN</name>
<protein>
    <recommendedName>
        <fullName>Tyrosine-protein kinase Fgr</fullName>
        <ecNumber>2.7.10.2</ecNumber>
    </recommendedName>
    <alternativeName>
        <fullName>Gardner-Rasheed feline sarcoma viral (v-fgr) oncogene homolog</fullName>
    </alternativeName>
    <alternativeName>
        <fullName>Proto-oncogene c-Fgr</fullName>
    </alternativeName>
    <alternativeName>
        <fullName>p55-Fgr</fullName>
    </alternativeName>
    <alternativeName>
        <fullName>p58-Fgr</fullName>
    </alternativeName>
    <alternativeName>
        <fullName>p58c-Fgr</fullName>
    </alternativeName>
</protein>
<keyword id="KW-0002">3D-structure</keyword>
<keyword id="KW-0067">ATP-binding</keyword>
<keyword id="KW-1003">Cell membrane</keyword>
<keyword id="KW-0966">Cell projection</keyword>
<keyword id="KW-0963">Cytoplasm</keyword>
<keyword id="KW-0206">Cytoskeleton</keyword>
<keyword id="KW-0391">Immunity</keyword>
<keyword id="KW-0399">Innate immunity</keyword>
<keyword id="KW-0418">Kinase</keyword>
<keyword id="KW-0449">Lipoprotein</keyword>
<keyword id="KW-0472">Membrane</keyword>
<keyword id="KW-0496">Mitochondrion</keyword>
<keyword id="KW-0999">Mitochondrion inner membrane</keyword>
<keyword id="KW-0519">Myristate</keyword>
<keyword id="KW-0547">Nucleotide-binding</keyword>
<keyword id="KW-0564">Palmitate</keyword>
<keyword id="KW-0597">Phosphoprotein</keyword>
<keyword id="KW-1267">Proteomics identification</keyword>
<keyword id="KW-0656">Proto-oncogene</keyword>
<keyword id="KW-1185">Reference proteome</keyword>
<keyword id="KW-0727">SH2 domain</keyword>
<keyword id="KW-0728">SH3 domain</keyword>
<keyword id="KW-0808">Transferase</keyword>
<keyword id="KW-0829">Tyrosine-protein kinase</keyword>
<keyword id="KW-0832">Ubl conjugation</keyword>
<dbReference type="EC" id="2.7.10.2"/>
<dbReference type="EMBL" id="M19722">
    <property type="protein sequence ID" value="AAA52451.1"/>
    <property type="molecule type" value="mRNA"/>
</dbReference>
<dbReference type="EMBL" id="AL031729">
    <property type="status" value="NOT_ANNOTATED_CDS"/>
    <property type="molecule type" value="Genomic_DNA"/>
</dbReference>
<dbReference type="EMBL" id="CH471059">
    <property type="protein sequence ID" value="EAX07748.1"/>
    <property type="molecule type" value="Genomic_DNA"/>
</dbReference>
<dbReference type="EMBL" id="CH471059">
    <property type="protein sequence ID" value="EAX07749.1"/>
    <property type="molecule type" value="Genomic_DNA"/>
</dbReference>
<dbReference type="EMBL" id="CH471059">
    <property type="protein sequence ID" value="EAX07750.1"/>
    <property type="molecule type" value="Genomic_DNA"/>
</dbReference>
<dbReference type="EMBL" id="BC064382">
    <property type="protein sequence ID" value="AAH64382.1"/>
    <property type="molecule type" value="mRNA"/>
</dbReference>
<dbReference type="EMBL" id="X52207">
    <property type="protein sequence ID" value="CAA36457.2"/>
    <property type="molecule type" value="Genomic_DNA"/>
</dbReference>
<dbReference type="EMBL" id="X52208">
    <property type="protein sequence ID" value="CAA36457.2"/>
    <property type="status" value="JOINED"/>
    <property type="molecule type" value="Genomic_DNA"/>
</dbReference>
<dbReference type="EMBL" id="M12724">
    <property type="protein sequence ID" value="AAA52762.1"/>
    <property type="molecule type" value="Genomic_DNA"/>
</dbReference>
<dbReference type="EMBL" id="M12719">
    <property type="protein sequence ID" value="AAA52762.1"/>
    <property type="status" value="JOINED"/>
    <property type="molecule type" value="Genomic_DNA"/>
</dbReference>
<dbReference type="EMBL" id="M12720">
    <property type="protein sequence ID" value="AAA52762.1"/>
    <property type="status" value="JOINED"/>
    <property type="molecule type" value="Genomic_DNA"/>
</dbReference>
<dbReference type="EMBL" id="M12721">
    <property type="protein sequence ID" value="AAA52762.1"/>
    <property type="status" value="JOINED"/>
    <property type="molecule type" value="Genomic_DNA"/>
</dbReference>
<dbReference type="EMBL" id="M12722">
    <property type="protein sequence ID" value="AAA52762.1"/>
    <property type="status" value="JOINED"/>
    <property type="molecule type" value="Genomic_DNA"/>
</dbReference>
<dbReference type="EMBL" id="M12723">
    <property type="protein sequence ID" value="AAA52762.1"/>
    <property type="status" value="JOINED"/>
    <property type="molecule type" value="Genomic_DNA"/>
</dbReference>
<dbReference type="CCDS" id="CCDS305.1"/>
<dbReference type="PIR" id="A27676">
    <property type="entry name" value="TVHUFR"/>
</dbReference>
<dbReference type="RefSeq" id="NP_001036194.1">
    <property type="nucleotide sequence ID" value="NM_001042729.2"/>
</dbReference>
<dbReference type="RefSeq" id="NP_001036212.1">
    <property type="nucleotide sequence ID" value="NM_001042747.2"/>
</dbReference>
<dbReference type="RefSeq" id="NP_005239.1">
    <property type="nucleotide sequence ID" value="NM_005248.3"/>
</dbReference>
<dbReference type="RefSeq" id="XP_006710515.1">
    <property type="nucleotide sequence ID" value="XM_006710452.2"/>
</dbReference>
<dbReference type="RefSeq" id="XP_011539312.1">
    <property type="nucleotide sequence ID" value="XM_011541010.1"/>
</dbReference>
<dbReference type="PDB" id="7JT9">
    <property type="method" value="X-ray"/>
    <property type="resolution" value="1.93 A"/>
    <property type="chains" value="A=77-138"/>
</dbReference>
<dbReference type="PDB" id="7UY0">
    <property type="method" value="X-ray"/>
    <property type="resolution" value="2.55 A"/>
    <property type="chains" value="A/B=80-527"/>
</dbReference>
<dbReference type="PDB" id="7UY3">
    <property type="method" value="X-ray"/>
    <property type="resolution" value="2.99 A"/>
    <property type="chains" value="A=80-527"/>
</dbReference>
<dbReference type="PDBsum" id="7JT9"/>
<dbReference type="PDBsum" id="7UY0"/>
<dbReference type="PDBsum" id="7UY3"/>
<dbReference type="SMR" id="P09769"/>
<dbReference type="BioGRID" id="108559">
    <property type="interactions" value="86"/>
</dbReference>
<dbReference type="DIP" id="DIP-1049N"/>
<dbReference type="ELM" id="P09769"/>
<dbReference type="FunCoup" id="P09769">
    <property type="interactions" value="350"/>
</dbReference>
<dbReference type="IntAct" id="P09769">
    <property type="interactions" value="67"/>
</dbReference>
<dbReference type="MINT" id="P09769"/>
<dbReference type="STRING" id="9606.ENSP00000363117"/>
<dbReference type="BindingDB" id="P09769"/>
<dbReference type="ChEMBL" id="CHEMBL4454"/>
<dbReference type="DrugBank" id="DB06616">
    <property type="generic name" value="Bosutinib"/>
</dbReference>
<dbReference type="DrugBank" id="DB01254">
    <property type="generic name" value="Dasatinib"/>
</dbReference>
<dbReference type="DrugBank" id="DB12010">
    <property type="generic name" value="Fostamatinib"/>
</dbReference>
<dbReference type="DrugBank" id="DB15035">
    <property type="generic name" value="Zanubrutinib"/>
</dbReference>
<dbReference type="DrugCentral" id="P09769"/>
<dbReference type="GuidetoPHARMACOLOGY" id="2024"/>
<dbReference type="GlyGen" id="P09769">
    <property type="glycosylation" value="2 sites, 1 O-linked glycan (2 sites)"/>
</dbReference>
<dbReference type="iPTMnet" id="P09769"/>
<dbReference type="PhosphoSitePlus" id="P09769"/>
<dbReference type="SwissPalm" id="P09769"/>
<dbReference type="BioMuta" id="FGR"/>
<dbReference type="DMDM" id="125358"/>
<dbReference type="CPTAC" id="CPTAC-1786"/>
<dbReference type="CPTAC" id="CPTAC-3064"/>
<dbReference type="jPOST" id="P09769"/>
<dbReference type="MassIVE" id="P09769"/>
<dbReference type="PaxDb" id="9606-ENSP00000363117"/>
<dbReference type="PeptideAtlas" id="P09769"/>
<dbReference type="ProteomicsDB" id="52268"/>
<dbReference type="ABCD" id="P09769">
    <property type="antibodies" value="2 sequenced antibodies"/>
</dbReference>
<dbReference type="Antibodypedia" id="711">
    <property type="antibodies" value="566 antibodies from 38 providers"/>
</dbReference>
<dbReference type="DNASU" id="2268"/>
<dbReference type="Ensembl" id="ENST00000374003.7">
    <property type="protein sequence ID" value="ENSP00000363115.3"/>
    <property type="gene ID" value="ENSG00000000938.13"/>
</dbReference>
<dbReference type="Ensembl" id="ENST00000374004.5">
    <property type="protein sequence ID" value="ENSP00000363116.1"/>
    <property type="gene ID" value="ENSG00000000938.13"/>
</dbReference>
<dbReference type="Ensembl" id="ENST00000374005.8">
    <property type="protein sequence ID" value="ENSP00000363117.3"/>
    <property type="gene ID" value="ENSG00000000938.13"/>
</dbReference>
<dbReference type="Ensembl" id="ENST00000399173.5">
    <property type="protein sequence ID" value="ENSP00000382126.1"/>
    <property type="gene ID" value="ENSG00000000938.13"/>
</dbReference>
<dbReference type="GeneID" id="2268"/>
<dbReference type="KEGG" id="hsa:2268"/>
<dbReference type="MANE-Select" id="ENST00000374005.8">
    <property type="protein sequence ID" value="ENSP00000363117.3"/>
    <property type="RefSeq nucleotide sequence ID" value="NM_005248.3"/>
    <property type="RefSeq protein sequence ID" value="NP_005239.1"/>
</dbReference>
<dbReference type="UCSC" id="uc001boj.4">
    <property type="organism name" value="human"/>
</dbReference>
<dbReference type="AGR" id="HGNC:3697"/>
<dbReference type="CTD" id="2268"/>
<dbReference type="DisGeNET" id="2268"/>
<dbReference type="GeneCards" id="FGR"/>
<dbReference type="HGNC" id="HGNC:3697">
    <property type="gene designation" value="FGR"/>
</dbReference>
<dbReference type="HPA" id="ENSG00000000938">
    <property type="expression patterns" value="Group enriched (bone marrow, lung, lymphoid tissue)"/>
</dbReference>
<dbReference type="MalaCards" id="FGR"/>
<dbReference type="MIM" id="164940">
    <property type="type" value="gene"/>
</dbReference>
<dbReference type="neXtProt" id="NX_P09769"/>
<dbReference type="OpenTargets" id="ENSG00000000938"/>
<dbReference type="PharmGKB" id="PA28135"/>
<dbReference type="VEuPathDB" id="HostDB:ENSG00000000938"/>
<dbReference type="eggNOG" id="KOG0197">
    <property type="taxonomic scope" value="Eukaryota"/>
</dbReference>
<dbReference type="GeneTree" id="ENSGT00940000157554"/>
<dbReference type="HOGENOM" id="CLU_000288_7_2_1"/>
<dbReference type="InParanoid" id="P09769"/>
<dbReference type="OMA" id="AQIPNYN"/>
<dbReference type="OrthoDB" id="4062651at2759"/>
<dbReference type="PAN-GO" id="P09769">
    <property type="GO annotations" value="7 GO annotations based on evolutionary models"/>
</dbReference>
<dbReference type="PhylomeDB" id="P09769"/>
<dbReference type="TreeFam" id="TF351634"/>
<dbReference type="BRENDA" id="2.7.10.2">
    <property type="organism ID" value="2681"/>
</dbReference>
<dbReference type="PathwayCommons" id="P09769"/>
<dbReference type="Reactome" id="R-HSA-2029481">
    <property type="pathway name" value="FCGR activation"/>
</dbReference>
<dbReference type="Reactome" id="R-HSA-432142">
    <property type="pathway name" value="Platelet sensitization by LDL"/>
</dbReference>
<dbReference type="Reactome" id="R-HSA-6798695">
    <property type="pathway name" value="Neutrophil degranulation"/>
</dbReference>
<dbReference type="Reactome" id="R-HSA-9664323">
    <property type="pathway name" value="FCGR3A-mediated IL10 synthesis"/>
</dbReference>
<dbReference type="Reactome" id="R-HSA-9664422">
    <property type="pathway name" value="FCGR3A-mediated phagocytosis"/>
</dbReference>
<dbReference type="SignaLink" id="P09769"/>
<dbReference type="SIGNOR" id="P09769"/>
<dbReference type="BioGRID-ORCS" id="2268">
    <property type="hits" value="13 hits in 1177 CRISPR screens"/>
</dbReference>
<dbReference type="ChiTaRS" id="FGR">
    <property type="organism name" value="human"/>
</dbReference>
<dbReference type="GeneWiki" id="FGR_(gene)"/>
<dbReference type="GenomeRNAi" id="2268"/>
<dbReference type="Pharos" id="P09769">
    <property type="development level" value="Tchem"/>
</dbReference>
<dbReference type="PRO" id="PR:P09769"/>
<dbReference type="Proteomes" id="UP000005640">
    <property type="component" value="Chromosome 1"/>
</dbReference>
<dbReference type="RNAct" id="P09769">
    <property type="molecule type" value="protein"/>
</dbReference>
<dbReference type="Bgee" id="ENSG00000000938">
    <property type="expression patterns" value="Expressed in granulocyte and 121 other cell types or tissues"/>
</dbReference>
<dbReference type="ExpressionAtlas" id="P09769">
    <property type="expression patterns" value="baseline and differential"/>
</dbReference>
<dbReference type="GO" id="GO:0015629">
    <property type="term" value="C:actin cytoskeleton"/>
    <property type="evidence" value="ECO:0007669"/>
    <property type="project" value="Ensembl"/>
</dbReference>
<dbReference type="GO" id="GO:0016235">
    <property type="term" value="C:aggresome"/>
    <property type="evidence" value="ECO:0000314"/>
    <property type="project" value="HPA"/>
</dbReference>
<dbReference type="GO" id="GO:0005829">
    <property type="term" value="C:cytosol"/>
    <property type="evidence" value="ECO:0000304"/>
    <property type="project" value="Reactome"/>
</dbReference>
<dbReference type="GO" id="GO:0070062">
    <property type="term" value="C:extracellular exosome"/>
    <property type="evidence" value="ECO:0007005"/>
    <property type="project" value="UniProtKB"/>
</dbReference>
<dbReference type="GO" id="GO:0005576">
    <property type="term" value="C:extracellular region"/>
    <property type="evidence" value="ECO:0000304"/>
    <property type="project" value="Reactome"/>
</dbReference>
<dbReference type="GO" id="GO:0005743">
    <property type="term" value="C:mitochondrial inner membrane"/>
    <property type="evidence" value="ECO:0007669"/>
    <property type="project" value="UniProtKB-SubCell"/>
</dbReference>
<dbReference type="GO" id="GO:0005758">
    <property type="term" value="C:mitochondrial intermembrane space"/>
    <property type="evidence" value="ECO:0007669"/>
    <property type="project" value="UniProtKB-SubCell"/>
</dbReference>
<dbReference type="GO" id="GO:0005886">
    <property type="term" value="C:plasma membrane"/>
    <property type="evidence" value="ECO:0000314"/>
    <property type="project" value="HPA"/>
</dbReference>
<dbReference type="GO" id="GO:0032587">
    <property type="term" value="C:ruffle membrane"/>
    <property type="evidence" value="ECO:0007669"/>
    <property type="project" value="UniProtKB-SubCell"/>
</dbReference>
<dbReference type="GO" id="GO:0034774">
    <property type="term" value="C:secretory granule lumen"/>
    <property type="evidence" value="ECO:0000304"/>
    <property type="project" value="Reactome"/>
</dbReference>
<dbReference type="GO" id="GO:0005524">
    <property type="term" value="F:ATP binding"/>
    <property type="evidence" value="ECO:0007669"/>
    <property type="project" value="UniProtKB-KW"/>
</dbReference>
<dbReference type="GO" id="GO:0034988">
    <property type="term" value="F:Fc-gamma receptor I complex binding"/>
    <property type="evidence" value="ECO:0000314"/>
    <property type="project" value="UniProtKB"/>
</dbReference>
<dbReference type="GO" id="GO:0034987">
    <property type="term" value="F:immunoglobulin receptor binding"/>
    <property type="evidence" value="ECO:0000250"/>
    <property type="project" value="UniProtKB"/>
</dbReference>
<dbReference type="GO" id="GO:0004715">
    <property type="term" value="F:non-membrane spanning protein tyrosine kinase activity"/>
    <property type="evidence" value="ECO:0000314"/>
    <property type="project" value="UniProtKB"/>
</dbReference>
<dbReference type="GO" id="GO:0001784">
    <property type="term" value="F:phosphotyrosine residue binding"/>
    <property type="evidence" value="ECO:0000353"/>
    <property type="project" value="CAFA"/>
</dbReference>
<dbReference type="GO" id="GO:0019901">
    <property type="term" value="F:protein kinase binding"/>
    <property type="evidence" value="ECO:0000250"/>
    <property type="project" value="UniProtKB"/>
</dbReference>
<dbReference type="GO" id="GO:0004713">
    <property type="term" value="F:protein tyrosine kinase activity"/>
    <property type="evidence" value="ECO:0000314"/>
    <property type="project" value="UniProtKB"/>
</dbReference>
<dbReference type="GO" id="GO:0005102">
    <property type="term" value="F:signaling receptor binding"/>
    <property type="evidence" value="ECO:0000318"/>
    <property type="project" value="GO_Central"/>
</dbReference>
<dbReference type="GO" id="GO:0030282">
    <property type="term" value="P:bone mineralization"/>
    <property type="evidence" value="ECO:0007669"/>
    <property type="project" value="Ensembl"/>
</dbReference>
<dbReference type="GO" id="GO:0030154">
    <property type="term" value="P:cell differentiation"/>
    <property type="evidence" value="ECO:0000318"/>
    <property type="project" value="GO_Central"/>
</dbReference>
<dbReference type="GO" id="GO:0007169">
    <property type="term" value="P:cell surface receptor protein tyrosine kinase signaling pathway"/>
    <property type="evidence" value="ECO:0000318"/>
    <property type="project" value="GO_Central"/>
</dbReference>
<dbReference type="GO" id="GO:0050830">
    <property type="term" value="P:defense response to Gram-positive bacterium"/>
    <property type="evidence" value="ECO:0000250"/>
    <property type="project" value="UniProtKB"/>
</dbReference>
<dbReference type="GO" id="GO:0038096">
    <property type="term" value="P:Fc-gamma receptor signaling pathway involved in phagocytosis"/>
    <property type="evidence" value="ECO:0000304"/>
    <property type="project" value="Reactome"/>
</dbReference>
<dbReference type="GO" id="GO:0002768">
    <property type="term" value="P:immune response-regulating cell surface receptor signaling pathway"/>
    <property type="evidence" value="ECO:0000304"/>
    <property type="project" value="UniProtKB"/>
</dbReference>
<dbReference type="GO" id="GO:0045087">
    <property type="term" value="P:innate immune response"/>
    <property type="evidence" value="ECO:0007669"/>
    <property type="project" value="UniProtKB-KW"/>
</dbReference>
<dbReference type="GO" id="GO:0007229">
    <property type="term" value="P:integrin-mediated signaling pathway"/>
    <property type="evidence" value="ECO:0000315"/>
    <property type="project" value="UniProtKB"/>
</dbReference>
<dbReference type="GO" id="GO:0002862">
    <property type="term" value="P:negative regulation of inflammatory response to antigenic stimulus"/>
    <property type="evidence" value="ECO:0000304"/>
    <property type="project" value="Reactome"/>
</dbReference>
<dbReference type="GO" id="GO:0032815">
    <property type="term" value="P:negative regulation of natural killer cell activation"/>
    <property type="evidence" value="ECO:0007669"/>
    <property type="project" value="Ensembl"/>
</dbReference>
<dbReference type="GO" id="GO:0018108">
    <property type="term" value="P:peptidyl-tyrosine phosphorylation"/>
    <property type="evidence" value="ECO:0000314"/>
    <property type="project" value="UniProtKB"/>
</dbReference>
<dbReference type="GO" id="GO:0030335">
    <property type="term" value="P:positive regulation of cell migration"/>
    <property type="evidence" value="ECO:0000250"/>
    <property type="project" value="UniProtKB"/>
</dbReference>
<dbReference type="GO" id="GO:0001819">
    <property type="term" value="P:positive regulation of cytokine production"/>
    <property type="evidence" value="ECO:0000250"/>
    <property type="project" value="UniProtKB"/>
</dbReference>
<dbReference type="GO" id="GO:0043306">
    <property type="term" value="P:positive regulation of mast cell degranulation"/>
    <property type="evidence" value="ECO:0000250"/>
    <property type="project" value="UniProtKB"/>
</dbReference>
<dbReference type="GO" id="GO:0051897">
    <property type="term" value="P:positive regulation of phosphatidylinositol 3-kinase/protein kinase B signal transduction"/>
    <property type="evidence" value="ECO:0000315"/>
    <property type="project" value="UniProtKB"/>
</dbReference>
<dbReference type="GO" id="GO:0046777">
    <property type="term" value="P:protein autophosphorylation"/>
    <property type="evidence" value="ECO:0000314"/>
    <property type="project" value="UniProtKB"/>
</dbReference>
<dbReference type="GO" id="GO:0006468">
    <property type="term" value="P:protein phosphorylation"/>
    <property type="evidence" value="ECO:0000304"/>
    <property type="project" value="ProtInc"/>
</dbReference>
<dbReference type="GO" id="GO:0008360">
    <property type="term" value="P:regulation of cell shape"/>
    <property type="evidence" value="ECO:0000250"/>
    <property type="project" value="UniProtKB"/>
</dbReference>
<dbReference type="GO" id="GO:0045088">
    <property type="term" value="P:regulation of innate immune response"/>
    <property type="evidence" value="ECO:0000250"/>
    <property type="project" value="UniProtKB"/>
</dbReference>
<dbReference type="GO" id="GO:0050764">
    <property type="term" value="P:regulation of phagocytosis"/>
    <property type="evidence" value="ECO:0000250"/>
    <property type="project" value="UniProtKB"/>
</dbReference>
<dbReference type="GO" id="GO:0045859">
    <property type="term" value="P:regulation of protein kinase activity"/>
    <property type="evidence" value="ECO:0000250"/>
    <property type="project" value="UniProtKB"/>
</dbReference>
<dbReference type="GO" id="GO:0009615">
    <property type="term" value="P:response to virus"/>
    <property type="evidence" value="ECO:0000304"/>
    <property type="project" value="ProtInc"/>
</dbReference>
<dbReference type="GO" id="GO:0048705">
    <property type="term" value="P:skeletal system morphogenesis"/>
    <property type="evidence" value="ECO:0007669"/>
    <property type="project" value="Ensembl"/>
</dbReference>
<dbReference type="CDD" id="cd10367">
    <property type="entry name" value="SH2_Src_Fgr"/>
    <property type="match status" value="1"/>
</dbReference>
<dbReference type="FunFam" id="1.10.510.10:FF:000553">
    <property type="entry name" value="Tyrosine-protein kinase"/>
    <property type="match status" value="1"/>
</dbReference>
<dbReference type="FunFam" id="2.30.30.40:FF:000022">
    <property type="entry name" value="Tyrosine-protein kinase"/>
    <property type="match status" value="1"/>
</dbReference>
<dbReference type="FunFam" id="3.30.200.20:FF:000016">
    <property type="entry name" value="Tyrosine-protein kinase"/>
    <property type="match status" value="1"/>
</dbReference>
<dbReference type="FunFam" id="3.30.505.10:FF:000120">
    <property type="entry name" value="Tyrosine-protein kinase Fyn"/>
    <property type="match status" value="1"/>
</dbReference>
<dbReference type="Gene3D" id="3.30.200.20">
    <property type="entry name" value="Phosphorylase Kinase, domain 1"/>
    <property type="match status" value="1"/>
</dbReference>
<dbReference type="Gene3D" id="3.30.505.10">
    <property type="entry name" value="SH2 domain"/>
    <property type="match status" value="1"/>
</dbReference>
<dbReference type="Gene3D" id="2.30.30.40">
    <property type="entry name" value="SH3 Domains"/>
    <property type="match status" value="1"/>
</dbReference>
<dbReference type="Gene3D" id="1.10.510.10">
    <property type="entry name" value="Transferase(Phosphotransferase) domain 1"/>
    <property type="match status" value="1"/>
</dbReference>
<dbReference type="InterPro" id="IPR035693">
    <property type="entry name" value="Fgr_SH2"/>
</dbReference>
<dbReference type="InterPro" id="IPR011009">
    <property type="entry name" value="Kinase-like_dom_sf"/>
</dbReference>
<dbReference type="InterPro" id="IPR050198">
    <property type="entry name" value="Non-receptor_tyrosine_kinases"/>
</dbReference>
<dbReference type="InterPro" id="IPR000719">
    <property type="entry name" value="Prot_kinase_dom"/>
</dbReference>
<dbReference type="InterPro" id="IPR017441">
    <property type="entry name" value="Protein_kinase_ATP_BS"/>
</dbReference>
<dbReference type="InterPro" id="IPR001245">
    <property type="entry name" value="Ser-Thr/Tyr_kinase_cat_dom"/>
</dbReference>
<dbReference type="InterPro" id="IPR000980">
    <property type="entry name" value="SH2"/>
</dbReference>
<dbReference type="InterPro" id="IPR036860">
    <property type="entry name" value="SH2_dom_sf"/>
</dbReference>
<dbReference type="InterPro" id="IPR036028">
    <property type="entry name" value="SH3-like_dom_sf"/>
</dbReference>
<dbReference type="InterPro" id="IPR001452">
    <property type="entry name" value="SH3_domain"/>
</dbReference>
<dbReference type="InterPro" id="IPR008266">
    <property type="entry name" value="Tyr_kinase_AS"/>
</dbReference>
<dbReference type="InterPro" id="IPR020635">
    <property type="entry name" value="Tyr_kinase_cat_dom"/>
</dbReference>
<dbReference type="PANTHER" id="PTHR24418">
    <property type="entry name" value="TYROSINE-PROTEIN KINASE"/>
    <property type="match status" value="1"/>
</dbReference>
<dbReference type="Pfam" id="PF07714">
    <property type="entry name" value="PK_Tyr_Ser-Thr"/>
    <property type="match status" value="1"/>
</dbReference>
<dbReference type="Pfam" id="PF00017">
    <property type="entry name" value="SH2"/>
    <property type="match status" value="1"/>
</dbReference>
<dbReference type="Pfam" id="PF00018">
    <property type="entry name" value="SH3_1"/>
    <property type="match status" value="1"/>
</dbReference>
<dbReference type="PRINTS" id="PR00401">
    <property type="entry name" value="SH2DOMAIN"/>
</dbReference>
<dbReference type="PRINTS" id="PR00452">
    <property type="entry name" value="SH3DOMAIN"/>
</dbReference>
<dbReference type="PRINTS" id="PR00109">
    <property type="entry name" value="TYRKINASE"/>
</dbReference>
<dbReference type="SMART" id="SM00252">
    <property type="entry name" value="SH2"/>
    <property type="match status" value="1"/>
</dbReference>
<dbReference type="SMART" id="SM00326">
    <property type="entry name" value="SH3"/>
    <property type="match status" value="1"/>
</dbReference>
<dbReference type="SMART" id="SM00219">
    <property type="entry name" value="TyrKc"/>
    <property type="match status" value="1"/>
</dbReference>
<dbReference type="SUPFAM" id="SSF56112">
    <property type="entry name" value="Protein kinase-like (PK-like)"/>
    <property type="match status" value="1"/>
</dbReference>
<dbReference type="SUPFAM" id="SSF55550">
    <property type="entry name" value="SH2 domain"/>
    <property type="match status" value="1"/>
</dbReference>
<dbReference type="SUPFAM" id="SSF50044">
    <property type="entry name" value="SH3-domain"/>
    <property type="match status" value="1"/>
</dbReference>
<dbReference type="PROSITE" id="PS00107">
    <property type="entry name" value="PROTEIN_KINASE_ATP"/>
    <property type="match status" value="1"/>
</dbReference>
<dbReference type="PROSITE" id="PS50011">
    <property type="entry name" value="PROTEIN_KINASE_DOM"/>
    <property type="match status" value="1"/>
</dbReference>
<dbReference type="PROSITE" id="PS00109">
    <property type="entry name" value="PROTEIN_KINASE_TYR"/>
    <property type="match status" value="1"/>
</dbReference>
<dbReference type="PROSITE" id="PS50001">
    <property type="entry name" value="SH2"/>
    <property type="match status" value="1"/>
</dbReference>
<dbReference type="PROSITE" id="PS50002">
    <property type="entry name" value="SH3"/>
    <property type="match status" value="1"/>
</dbReference>
<reference key="1">
    <citation type="journal article" date="1988" name="Mol. Cell. Biol.">
        <title>Primary structure of the human fgr proto-oncogene product p55c-fgr.</title>
        <authorList>
            <person name="Katamine S."/>
            <person name="Notario V."/>
            <person name="Rao C.D."/>
            <person name="Miki T."/>
            <person name="Cheah M.S.C."/>
            <person name="Tronick S.R."/>
            <person name="Robbins K.C."/>
        </authorList>
    </citation>
    <scope>NUCLEOTIDE SEQUENCE [MRNA]</scope>
</reference>
<reference key="2">
    <citation type="journal article" date="2006" name="Nature">
        <title>The DNA sequence and biological annotation of human chromosome 1.</title>
        <authorList>
            <person name="Gregory S.G."/>
            <person name="Barlow K.F."/>
            <person name="McLay K.E."/>
            <person name="Kaul R."/>
            <person name="Swarbreck D."/>
            <person name="Dunham A."/>
            <person name="Scott C.E."/>
            <person name="Howe K.L."/>
            <person name="Woodfine K."/>
            <person name="Spencer C.C.A."/>
            <person name="Jones M.C."/>
            <person name="Gillson C."/>
            <person name="Searle S."/>
            <person name="Zhou Y."/>
            <person name="Kokocinski F."/>
            <person name="McDonald L."/>
            <person name="Evans R."/>
            <person name="Phillips K."/>
            <person name="Atkinson A."/>
            <person name="Cooper R."/>
            <person name="Jones C."/>
            <person name="Hall R.E."/>
            <person name="Andrews T.D."/>
            <person name="Lloyd C."/>
            <person name="Ainscough R."/>
            <person name="Almeida J.P."/>
            <person name="Ambrose K.D."/>
            <person name="Anderson F."/>
            <person name="Andrew R.W."/>
            <person name="Ashwell R.I.S."/>
            <person name="Aubin K."/>
            <person name="Babbage A.K."/>
            <person name="Bagguley C.L."/>
            <person name="Bailey J."/>
            <person name="Beasley H."/>
            <person name="Bethel G."/>
            <person name="Bird C.P."/>
            <person name="Bray-Allen S."/>
            <person name="Brown J.Y."/>
            <person name="Brown A.J."/>
            <person name="Buckley D."/>
            <person name="Burton J."/>
            <person name="Bye J."/>
            <person name="Carder C."/>
            <person name="Chapman J.C."/>
            <person name="Clark S.Y."/>
            <person name="Clarke G."/>
            <person name="Clee C."/>
            <person name="Cobley V."/>
            <person name="Collier R.E."/>
            <person name="Corby N."/>
            <person name="Coville G.J."/>
            <person name="Davies J."/>
            <person name="Deadman R."/>
            <person name="Dunn M."/>
            <person name="Earthrowl M."/>
            <person name="Ellington A.G."/>
            <person name="Errington H."/>
            <person name="Frankish A."/>
            <person name="Frankland J."/>
            <person name="French L."/>
            <person name="Garner P."/>
            <person name="Garnett J."/>
            <person name="Gay L."/>
            <person name="Ghori M.R.J."/>
            <person name="Gibson R."/>
            <person name="Gilby L.M."/>
            <person name="Gillett W."/>
            <person name="Glithero R.J."/>
            <person name="Grafham D.V."/>
            <person name="Griffiths C."/>
            <person name="Griffiths-Jones S."/>
            <person name="Grocock R."/>
            <person name="Hammond S."/>
            <person name="Harrison E.S.I."/>
            <person name="Hart E."/>
            <person name="Haugen E."/>
            <person name="Heath P.D."/>
            <person name="Holmes S."/>
            <person name="Holt K."/>
            <person name="Howden P.J."/>
            <person name="Hunt A.R."/>
            <person name="Hunt S.E."/>
            <person name="Hunter G."/>
            <person name="Isherwood J."/>
            <person name="James R."/>
            <person name="Johnson C."/>
            <person name="Johnson D."/>
            <person name="Joy A."/>
            <person name="Kay M."/>
            <person name="Kershaw J.K."/>
            <person name="Kibukawa M."/>
            <person name="Kimberley A.M."/>
            <person name="King A."/>
            <person name="Knights A.J."/>
            <person name="Lad H."/>
            <person name="Laird G."/>
            <person name="Lawlor S."/>
            <person name="Leongamornlert D.A."/>
            <person name="Lloyd D.M."/>
            <person name="Loveland J."/>
            <person name="Lovell J."/>
            <person name="Lush M.J."/>
            <person name="Lyne R."/>
            <person name="Martin S."/>
            <person name="Mashreghi-Mohammadi M."/>
            <person name="Matthews L."/>
            <person name="Matthews N.S.W."/>
            <person name="McLaren S."/>
            <person name="Milne S."/>
            <person name="Mistry S."/>
            <person name="Moore M.J.F."/>
            <person name="Nickerson T."/>
            <person name="O'Dell C.N."/>
            <person name="Oliver K."/>
            <person name="Palmeiri A."/>
            <person name="Palmer S.A."/>
            <person name="Parker A."/>
            <person name="Patel D."/>
            <person name="Pearce A.V."/>
            <person name="Peck A.I."/>
            <person name="Pelan S."/>
            <person name="Phelps K."/>
            <person name="Phillimore B.J."/>
            <person name="Plumb R."/>
            <person name="Rajan J."/>
            <person name="Raymond C."/>
            <person name="Rouse G."/>
            <person name="Saenphimmachak C."/>
            <person name="Sehra H.K."/>
            <person name="Sheridan E."/>
            <person name="Shownkeen R."/>
            <person name="Sims S."/>
            <person name="Skuce C.D."/>
            <person name="Smith M."/>
            <person name="Steward C."/>
            <person name="Subramanian S."/>
            <person name="Sycamore N."/>
            <person name="Tracey A."/>
            <person name="Tromans A."/>
            <person name="Van Helmond Z."/>
            <person name="Wall M."/>
            <person name="Wallis J.M."/>
            <person name="White S."/>
            <person name="Whitehead S.L."/>
            <person name="Wilkinson J.E."/>
            <person name="Willey D.L."/>
            <person name="Williams H."/>
            <person name="Wilming L."/>
            <person name="Wray P.W."/>
            <person name="Wu Z."/>
            <person name="Coulson A."/>
            <person name="Vaudin M."/>
            <person name="Sulston J.E."/>
            <person name="Durbin R.M."/>
            <person name="Hubbard T."/>
            <person name="Wooster R."/>
            <person name="Dunham I."/>
            <person name="Carter N.P."/>
            <person name="McVean G."/>
            <person name="Ross M.T."/>
            <person name="Harrow J."/>
            <person name="Olson M.V."/>
            <person name="Beck S."/>
            <person name="Rogers J."/>
            <person name="Bentley D.R."/>
        </authorList>
    </citation>
    <scope>NUCLEOTIDE SEQUENCE [LARGE SCALE GENOMIC DNA]</scope>
</reference>
<reference key="3">
    <citation type="submission" date="2005-09" db="EMBL/GenBank/DDBJ databases">
        <authorList>
            <person name="Mural R.J."/>
            <person name="Istrail S."/>
            <person name="Sutton G.G."/>
            <person name="Florea L."/>
            <person name="Halpern A.L."/>
            <person name="Mobarry C.M."/>
            <person name="Lippert R."/>
            <person name="Walenz B."/>
            <person name="Shatkay H."/>
            <person name="Dew I."/>
            <person name="Miller J.R."/>
            <person name="Flanigan M.J."/>
            <person name="Edwards N.J."/>
            <person name="Bolanos R."/>
            <person name="Fasulo D."/>
            <person name="Halldorsson B.V."/>
            <person name="Hannenhalli S."/>
            <person name="Turner R."/>
            <person name="Yooseph S."/>
            <person name="Lu F."/>
            <person name="Nusskern D.R."/>
            <person name="Shue B.C."/>
            <person name="Zheng X.H."/>
            <person name="Zhong F."/>
            <person name="Delcher A.L."/>
            <person name="Huson D.H."/>
            <person name="Kravitz S.A."/>
            <person name="Mouchard L."/>
            <person name="Reinert K."/>
            <person name="Remington K.A."/>
            <person name="Clark A.G."/>
            <person name="Waterman M.S."/>
            <person name="Eichler E.E."/>
            <person name="Adams M.D."/>
            <person name="Hunkapiller M.W."/>
            <person name="Myers E.W."/>
            <person name="Venter J.C."/>
        </authorList>
    </citation>
    <scope>NUCLEOTIDE SEQUENCE [LARGE SCALE GENOMIC DNA]</scope>
</reference>
<reference key="4">
    <citation type="journal article" date="2004" name="Genome Res.">
        <title>The status, quality, and expansion of the NIH full-length cDNA project: the Mammalian Gene Collection (MGC).</title>
        <authorList>
            <consortium name="The MGC Project Team"/>
        </authorList>
    </citation>
    <scope>NUCLEOTIDE SEQUENCE [LARGE SCALE MRNA]</scope>
    <source>
        <tissue>Brain</tissue>
    </source>
</reference>
<reference key="5">
    <citation type="journal article" date="1988" name="Br. J. Cancer">
        <title>Structure and expression of c-fgr protooncogene mRNA in Epstein-Barr virus converted cell lines.</title>
        <authorList>
            <person name="Brickell P.M."/>
            <person name="Patel M."/>
        </authorList>
    </citation>
    <scope>NUCLEOTIDE SEQUENCE [MRNA] OF 1-177 AND 524-529</scope>
</reference>
<reference key="6">
    <citation type="journal article" date="1987" name="Oncogene">
        <title>Isolation and sequencing of cDNA clones homologous to the v-fgr oncogene from a human B lymphocyte cell line, IM-9.</title>
        <authorList>
            <person name="Inoue K."/>
            <person name="Ikawa S."/>
            <person name="Semba K."/>
            <person name="Sukegawa J."/>
            <person name="Yamamoto T."/>
            <person name="Toyoshima K."/>
        </authorList>
    </citation>
    <scope>NUCLEOTIDE SEQUENCE [MRNA] OF 1-143</scope>
</reference>
<reference key="7">
    <citation type="journal article" date="1990" name="Oncogene">
        <title>Structure of the complete human c-fgr proto-oncogene and identification of multiple transcriptional start sites.</title>
        <authorList>
            <person name="Patel M."/>
            <person name="Leevers S.J."/>
            <person name="Brickell P.M."/>
        </authorList>
    </citation>
    <scope>NUCLEOTIDE SEQUENCE [GENOMIC DNA] OF 1-142</scope>
</reference>
<reference key="8">
    <citation type="journal article" date="1986" name="Mol. Cell. Biol.">
        <title>Structure, expression, and chromosomal location of the human c-fgr gene.</title>
        <authorList>
            <person name="Nishizawa M."/>
            <person name="Semba K."/>
            <person name="Yoshida M.C."/>
            <person name="Yamamoto T."/>
            <person name="Sasaki M."/>
            <person name="Toyoshima K."/>
        </authorList>
    </citation>
    <scope>NUCLEOTIDE SEQUENCE [GENOMIC DNA] OF 111-416</scope>
</reference>
<reference key="9">
    <citation type="journal article" date="1990" name="Mol. Cell. Biol.">
        <title>Specific expression of human c-fgr in natural immunity effector cells.</title>
        <authorList>
            <person name="Inoue K."/>
            <person name="Yamamoto T."/>
            <person name="Toyoshima K."/>
        </authorList>
    </citation>
    <scope>CATALYTIC ACTIVITY</scope>
    <scope>AUTOPHOSPHORYLATION</scope>
    <scope>TISSUE SPECIFICITY</scope>
</reference>
<reference key="10">
    <citation type="journal article" date="1992" name="J. Biol. Chem.">
        <title>Diverse biologic properties imparted by the c-fgr proto-oncogene.</title>
        <authorList>
            <person name="Sartor O."/>
            <person name="Moriuchi R."/>
            <person name="Sameshima J.H."/>
            <person name="Severino M."/>
            <person name="Gutkind J.S."/>
            <person name="Robbins K.C."/>
        </authorList>
    </citation>
    <scope>FUNCTION AS PROTO-ONCOGENE</scope>
    <scope>ROLE IN DISEASE</scope>
    <scope>CATALYTIC ACTIVITY</scope>
    <scope>MUTAGENESIS OF TYR-523</scope>
</reference>
<reference key="11">
    <citation type="journal article" date="1993" name="Proc. Natl. Acad. Sci. U.S.A.">
        <title>Association of immunoglobulin G Fc receptor II with Src-like protein-tyrosine kinase Fgr in neutrophils.</title>
        <authorList>
            <person name="Hamada F."/>
            <person name="Aoki M."/>
            <person name="Akiyama T."/>
            <person name="Toyoshima K."/>
        </authorList>
    </citation>
    <scope>INTERACTION WITH FCGR2A AND/OR FCGR2B</scope>
    <scope>CATALYTIC ACTIVITY</scope>
    <scope>ACTIVITY REGULATION</scope>
    <scope>AUTOPHOSPHORYLATION</scope>
    <scope>TISSUE SPECIFICITY</scope>
</reference>
<reference key="12">
    <citation type="journal article" date="1994" name="J. Cell Biol.">
        <title>Beta 2 integrin-dependent protein tyrosine phosphorylation and activation of the FGR protein tyrosine kinase in human neutrophils.</title>
        <authorList>
            <person name="Berton G."/>
            <person name="Fumagalli L."/>
            <person name="Laudanna C."/>
            <person name="Sorio C."/>
        </authorList>
    </citation>
    <scope>PHOSPHORYLATION</scope>
    <scope>FUNCTION IN INTEGRIN SIGNALING</scope>
</reference>
<reference key="13">
    <citation type="journal article" date="1996" name="FEBS Lett.">
        <title>Activation of SRC family kinases in human neutrophils. Evidence that p58C-FGR and p53/56LYN redistributed to a Triton X-100-insoluble cytoskeletal fraction, also enriched in the caveolar protein caveolin, display an enhanced kinase activity.</title>
        <authorList>
            <person name="Yan S.R."/>
            <person name="Fumagalli L."/>
            <person name="Berton G."/>
        </authorList>
    </citation>
    <scope>SUBCELLULAR LOCATION AT THE CYTOSKELETON</scope>
    <scope>ACTIVITY REGULATION</scope>
</reference>
<reference key="14">
    <citation type="journal article" date="2000" name="Exp. Cell Res.">
        <title>Clustering of beta(2)-integrins on human neutrophils activates dual signaling pathways to PtdIns 3-kinase.</title>
        <authorList>
            <person name="Axelsson L."/>
            <person name="Hellberg C."/>
            <person name="Melander F."/>
            <person name="Smith D."/>
            <person name="Zheng L."/>
            <person name="Andersson T."/>
        </authorList>
    </citation>
    <scope>FUNCTION IN ACTIVATION OF PIK3R1</scope>
    <scope>PHOSPHORYLATION</scope>
    <scope>INTERACTION WITH ITGB2 AND PIK3R1</scope>
</reference>
<reference key="15">
    <citation type="journal article" date="2001" name="J. Biol. Chem.">
        <title>Phosphatidic acid regulates tyrosine phosphorylating activity in human neutrophils: enhancement of Fgr activity.</title>
        <authorList>
            <person name="Sergeant S."/>
            <person name="Waite K.A."/>
            <person name="Heravi J."/>
            <person name="McPhail L.C."/>
        </authorList>
    </citation>
    <scope>ACTIVITY REGULATION</scope>
    <scope>SUBCELLULAR LOCATION</scope>
    <scope>TISSUE SPECIFICITY</scope>
</reference>
<reference key="16">
    <citation type="journal article" date="2003" name="Biochem. J.">
        <title>Fgr but not Syk tyrosine kinase is a target for beta 2 integrin-induced c-Cbl-mediated ubiquitination in adherent human neutrophils.</title>
        <authorList>
            <person name="Melander F."/>
            <person name="Andersson T."/>
            <person name="Dib K."/>
        </authorList>
    </citation>
    <scope>UBIQUITINATION</scope>
    <scope>INTERACTION WITH CBL</scope>
</reference>
<reference key="17">
    <citation type="journal article" date="2007" name="J. Cell Sci.">
        <title>Sorting of Fas ligand to secretory lysosomes is regulated by mono-ubiquitylation and phosphorylation.</title>
        <authorList>
            <person name="Zuccato E."/>
            <person name="Blott E.J."/>
            <person name="Holt O."/>
            <person name="Sigismund S."/>
            <person name="Shaw M."/>
            <person name="Bossi G."/>
            <person name="Griffiths G.M."/>
        </authorList>
    </citation>
    <scope>FUNCTION IN PHOSPHORYLATION OF FASLG</scope>
    <scope>INTERACTION WITH FASLG</scope>
</reference>
<reference key="18">
    <citation type="journal article" date="2009" name="Mol. Cell. Proteomics">
        <title>Large-scale proteomics analysis of the human kinome.</title>
        <authorList>
            <person name="Oppermann F.S."/>
            <person name="Gnad F."/>
            <person name="Olsen J.V."/>
            <person name="Hornberger R."/>
            <person name="Greff Z."/>
            <person name="Keri G."/>
            <person name="Mann M."/>
            <person name="Daub H."/>
        </authorList>
    </citation>
    <scope>PHOSPHORYLATION [LARGE SCALE ANALYSIS] AT TYR-34; TYR-412 AND TYR-523</scope>
    <scope>IDENTIFICATION BY MASS SPECTROMETRY [LARGE SCALE ANALYSIS]</scope>
</reference>
<reference key="19">
    <citation type="journal article" date="2007" name="Nature">
        <title>Patterns of somatic mutation in human cancer genomes.</title>
        <authorList>
            <person name="Greenman C."/>
            <person name="Stephens P."/>
            <person name="Smith R."/>
            <person name="Dalgliesh G.L."/>
            <person name="Hunter C."/>
            <person name="Bignell G."/>
            <person name="Davies H."/>
            <person name="Teague J."/>
            <person name="Butler A."/>
            <person name="Stevens C."/>
            <person name="Edkins S."/>
            <person name="O'Meara S."/>
            <person name="Vastrik I."/>
            <person name="Schmidt E.E."/>
            <person name="Avis T."/>
            <person name="Barthorpe S."/>
            <person name="Bhamra G."/>
            <person name="Buck G."/>
            <person name="Choudhury B."/>
            <person name="Clements J."/>
            <person name="Cole J."/>
            <person name="Dicks E."/>
            <person name="Forbes S."/>
            <person name="Gray K."/>
            <person name="Halliday K."/>
            <person name="Harrison R."/>
            <person name="Hills K."/>
            <person name="Hinton J."/>
            <person name="Jenkinson A."/>
            <person name="Jones D."/>
            <person name="Menzies A."/>
            <person name="Mironenko T."/>
            <person name="Perry J."/>
            <person name="Raine K."/>
            <person name="Richardson D."/>
            <person name="Shepherd R."/>
            <person name="Small A."/>
            <person name="Tofts C."/>
            <person name="Varian J."/>
            <person name="Webb T."/>
            <person name="West S."/>
            <person name="Widaa S."/>
            <person name="Yates A."/>
            <person name="Cahill D.P."/>
            <person name="Louis D.N."/>
            <person name="Goldstraw P."/>
            <person name="Nicholson A.G."/>
            <person name="Brasseur F."/>
            <person name="Looijenga L."/>
            <person name="Weber B.L."/>
            <person name="Chiew Y.-E."/>
            <person name="DeFazio A."/>
            <person name="Greaves M.F."/>
            <person name="Green A.R."/>
            <person name="Campbell P."/>
            <person name="Birney E."/>
            <person name="Easton D.F."/>
            <person name="Chenevix-Trench G."/>
            <person name="Tan M.-H."/>
            <person name="Khoo S.K."/>
            <person name="Teh B.T."/>
            <person name="Yuen S.T."/>
            <person name="Leung S.Y."/>
            <person name="Wooster R."/>
            <person name="Futreal P.A."/>
            <person name="Stratton M.R."/>
        </authorList>
    </citation>
    <scope>VARIANTS [LARGE SCALE ANALYSIS] ILE-110 AND ARG-130</scope>
</reference>
<proteinExistence type="evidence at protein level"/>
<accession>P09769</accession>
<accession>D3DPL7</accession>
<accession>Q9UIQ3</accession>
<evidence type="ECO:0000250" key="1"/>
<evidence type="ECO:0000250" key="2">
    <source>
        <dbReference type="UniProtKB" id="P14234"/>
    </source>
</evidence>
<evidence type="ECO:0000255" key="3">
    <source>
        <dbReference type="PROSITE-ProRule" id="PRU00159"/>
    </source>
</evidence>
<evidence type="ECO:0000255" key="4">
    <source>
        <dbReference type="PROSITE-ProRule" id="PRU00191"/>
    </source>
</evidence>
<evidence type="ECO:0000255" key="5">
    <source>
        <dbReference type="PROSITE-ProRule" id="PRU00192"/>
    </source>
</evidence>
<evidence type="ECO:0000255" key="6">
    <source>
        <dbReference type="PROSITE-ProRule" id="PRU10028"/>
    </source>
</evidence>
<evidence type="ECO:0000269" key="7">
    <source>
    </source>
</evidence>
<evidence type="ECO:0000269" key="8">
    <source>
    </source>
</evidence>
<evidence type="ECO:0000269" key="9">
    <source>
    </source>
</evidence>
<evidence type="ECO:0000269" key="10">
    <source>
    </source>
</evidence>
<evidence type="ECO:0000269" key="11">
    <source>
    </source>
</evidence>
<evidence type="ECO:0000269" key="12">
    <source>
    </source>
</evidence>
<evidence type="ECO:0000269" key="13">
    <source>
    </source>
</evidence>
<evidence type="ECO:0000269" key="14">
    <source>
    </source>
</evidence>
<evidence type="ECO:0000269" key="15">
    <source>
    </source>
</evidence>
<evidence type="ECO:0000269" key="16">
    <source>
    </source>
</evidence>
<evidence type="ECO:0000305" key="17"/>
<evidence type="ECO:0007744" key="18">
    <source>
    </source>
</evidence>
<evidence type="ECO:0007829" key="19">
    <source>
        <dbReference type="PDB" id="7JT9"/>
    </source>
</evidence>
<evidence type="ECO:0007829" key="20">
    <source>
        <dbReference type="PDB" id="7UY0"/>
    </source>
</evidence>
<evidence type="ECO:0007829" key="21">
    <source>
        <dbReference type="PDB" id="7UY3"/>
    </source>
</evidence>
<feature type="initiator methionine" description="Removed">
    <location>
        <position position="1"/>
    </location>
</feature>
<feature type="chain" id="PRO_0000088091" description="Tyrosine-protein kinase Fgr">
    <location>
        <begin position="2"/>
        <end position="529"/>
    </location>
</feature>
<feature type="domain" description="SH3" evidence="5">
    <location>
        <begin position="77"/>
        <end position="138"/>
    </location>
</feature>
<feature type="domain" description="SH2" evidence="4">
    <location>
        <begin position="144"/>
        <end position="241"/>
    </location>
</feature>
<feature type="domain" description="Protein kinase" evidence="3">
    <location>
        <begin position="263"/>
        <end position="516"/>
    </location>
</feature>
<feature type="active site" description="Proton acceptor" evidence="3 6">
    <location>
        <position position="382"/>
    </location>
</feature>
<feature type="binding site" evidence="3">
    <location>
        <begin position="269"/>
        <end position="277"/>
    </location>
    <ligand>
        <name>ATP</name>
        <dbReference type="ChEBI" id="CHEBI:30616"/>
    </ligand>
</feature>
<feature type="binding site" evidence="3">
    <location>
        <position position="291"/>
    </location>
    <ligand>
        <name>ATP</name>
        <dbReference type="ChEBI" id="CHEBI:30616"/>
    </ligand>
</feature>
<feature type="modified residue" description="Phosphotyrosine" evidence="18">
    <location>
        <position position="34"/>
    </location>
</feature>
<feature type="modified residue" description="Phosphotyrosine" evidence="2">
    <location>
        <position position="208"/>
    </location>
</feature>
<feature type="modified residue" description="Phosphoserine" evidence="2">
    <location>
        <position position="218"/>
    </location>
</feature>
<feature type="modified residue" description="Phosphotyrosine" evidence="18">
    <location>
        <position position="412"/>
    </location>
</feature>
<feature type="modified residue" description="Phosphotyrosine; by SRC" evidence="18">
    <location>
        <position position="523"/>
    </location>
</feature>
<feature type="lipid moiety-binding region" description="N-myristoyl glycine" evidence="1">
    <location>
        <position position="2"/>
    </location>
</feature>
<feature type="lipid moiety-binding region" description="S-palmitoyl cysteine" evidence="1">
    <location>
        <position position="3"/>
    </location>
</feature>
<feature type="lipid moiety-binding region" description="S-palmitoyl cysteine" evidence="1">
    <location>
        <position position="6"/>
    </location>
</feature>
<feature type="sequence variant" id="VAR_041700" description="In dbSNP:rs34597831." evidence="11">
    <original>T</original>
    <variation>I</variation>
    <location>
        <position position="110"/>
    </location>
</feature>
<feature type="sequence variant" id="VAR_041701" description="In dbSNP:rs35334091." evidence="11">
    <original>S</original>
    <variation>R</variation>
    <location>
        <position position="130"/>
    </location>
</feature>
<feature type="mutagenesis site" description="Strongly increased catalytic activity. Functions as oncogene." evidence="12">
    <original>Y</original>
    <variation>F</variation>
    <location>
        <position position="523"/>
    </location>
</feature>
<feature type="strand" evidence="19">
    <location>
        <begin position="82"/>
        <end position="86"/>
    </location>
</feature>
<feature type="strand" evidence="20">
    <location>
        <begin position="92"/>
        <end position="95"/>
    </location>
</feature>
<feature type="strand" evidence="19">
    <location>
        <begin position="103"/>
        <end position="108"/>
    </location>
</feature>
<feature type="strand" evidence="19">
    <location>
        <begin position="112"/>
        <end position="119"/>
    </location>
</feature>
<feature type="turn" evidence="19">
    <location>
        <begin position="120"/>
        <end position="122"/>
    </location>
</feature>
<feature type="strand" evidence="19">
    <location>
        <begin position="125"/>
        <end position="129"/>
    </location>
</feature>
<feature type="helix" evidence="19">
    <location>
        <begin position="130"/>
        <end position="132"/>
    </location>
</feature>
<feature type="strand" evidence="19">
    <location>
        <begin position="133"/>
        <end position="135"/>
    </location>
</feature>
<feature type="helix" evidence="20">
    <location>
        <begin position="139"/>
        <end position="141"/>
    </location>
</feature>
<feature type="helix" evidence="20">
    <location>
        <begin position="151"/>
        <end position="158"/>
    </location>
</feature>
<feature type="strand" evidence="20">
    <location>
        <begin position="167"/>
        <end position="172"/>
    </location>
</feature>
<feature type="strand" evidence="20">
    <location>
        <begin position="174"/>
        <end position="176"/>
    </location>
</feature>
<feature type="strand" evidence="20">
    <location>
        <begin position="180"/>
        <end position="188"/>
    </location>
</feature>
<feature type="turn" evidence="20">
    <location>
        <begin position="189"/>
        <end position="191"/>
    </location>
</feature>
<feature type="strand" evidence="20">
    <location>
        <begin position="192"/>
        <end position="202"/>
    </location>
</feature>
<feature type="strand" evidence="20">
    <location>
        <begin position="204"/>
        <end position="206"/>
    </location>
</feature>
<feature type="strand" evidence="20">
    <location>
        <begin position="208"/>
        <end position="211"/>
    </location>
</feature>
<feature type="strand" evidence="20">
    <location>
        <begin position="216"/>
        <end position="218"/>
    </location>
</feature>
<feature type="helix" evidence="20">
    <location>
        <begin position="219"/>
        <end position="228"/>
    </location>
</feature>
<feature type="strand" evidence="20">
    <location>
        <begin position="231"/>
        <end position="235"/>
    </location>
</feature>
<feature type="strand" evidence="20">
    <location>
        <begin position="249"/>
        <end position="252"/>
    </location>
</feature>
<feature type="helix" evidence="20">
    <location>
        <begin position="260"/>
        <end position="262"/>
    </location>
</feature>
<feature type="strand" evidence="20">
    <location>
        <begin position="263"/>
        <end position="271"/>
    </location>
</feature>
<feature type="strand" evidence="20">
    <location>
        <begin position="273"/>
        <end position="282"/>
    </location>
</feature>
<feature type="turn" evidence="20">
    <location>
        <begin position="283"/>
        <end position="285"/>
    </location>
</feature>
<feature type="strand" evidence="20">
    <location>
        <begin position="286"/>
        <end position="293"/>
    </location>
</feature>
<feature type="helix" evidence="20">
    <location>
        <begin position="300"/>
        <end position="310"/>
    </location>
</feature>
<feature type="strand" evidence="20">
    <location>
        <begin position="321"/>
        <end position="325"/>
    </location>
</feature>
<feature type="strand" evidence="20">
    <location>
        <begin position="327"/>
        <end position="329"/>
    </location>
</feature>
<feature type="strand" evidence="20">
    <location>
        <begin position="331"/>
        <end position="334"/>
    </location>
</feature>
<feature type="helix" evidence="20">
    <location>
        <begin position="342"/>
        <end position="345"/>
    </location>
</feature>
<feature type="helix" evidence="20">
    <location>
        <begin position="349"/>
        <end position="352"/>
    </location>
</feature>
<feature type="helix" evidence="20">
    <location>
        <begin position="356"/>
        <end position="375"/>
    </location>
</feature>
<feature type="helix" evidence="20">
    <location>
        <begin position="385"/>
        <end position="387"/>
    </location>
</feature>
<feature type="strand" evidence="20">
    <location>
        <begin position="388"/>
        <end position="390"/>
    </location>
</feature>
<feature type="helix" evidence="20">
    <location>
        <begin position="392"/>
        <end position="394"/>
    </location>
</feature>
<feature type="strand" evidence="20">
    <location>
        <begin position="396"/>
        <end position="398"/>
    </location>
</feature>
<feature type="helix" evidence="20">
    <location>
        <begin position="403"/>
        <end position="406"/>
    </location>
</feature>
<feature type="strand" evidence="21">
    <location>
        <begin position="407"/>
        <end position="412"/>
    </location>
</feature>
<feature type="helix" evidence="20">
    <location>
        <begin position="422"/>
        <end position="424"/>
    </location>
</feature>
<feature type="helix" evidence="20">
    <location>
        <begin position="427"/>
        <end position="432"/>
    </location>
</feature>
<feature type="helix" evidence="20">
    <location>
        <begin position="437"/>
        <end position="452"/>
    </location>
</feature>
<feature type="helix" evidence="20">
    <location>
        <begin position="464"/>
        <end position="472"/>
    </location>
</feature>
<feature type="helix" evidence="20">
    <location>
        <begin position="485"/>
        <end position="494"/>
    </location>
</feature>
<feature type="helix" evidence="20">
    <location>
        <begin position="499"/>
        <end position="501"/>
    </location>
</feature>
<feature type="helix" evidence="20">
    <location>
        <begin position="505"/>
        <end position="513"/>
    </location>
</feature>
<feature type="turn" evidence="20">
    <location>
        <begin position="514"/>
        <end position="516"/>
    </location>
</feature>
<feature type="strand" evidence="20">
    <location>
        <begin position="522"/>
        <end position="524"/>
    </location>
</feature>
<sequence length="529" mass="59479">MGCVFCKKLEPVATAKEDAGLEGDFRSYGAADHYGPDPTKARPASSFAHIPNYSNFSSQAINPGFLDSGTIRGVSGIGVTLFIALYDYEARTEDDLTFTKGEKFHILNNTEGDWWEARSLSSGKTGCIPSNYVAPVDSIQAEEWYFGKIGRKDAERQLLSPGNPQGAFLIRESETTKGAYSLSIRDWDQTRGDHVKHYKIRKLDMGGYYITTRVQFNSVQELVQHYMEVNDGLCNLLIAPCTIMKPQTLGLAKDAWEISRSSITLERRLGTGCFGDVWLGTWNGSTKVAVKTLKPGTMSPKAFLEEAQVMKLLRHDKLVQLYAVVSEEPIYIVTEFMCHGSLLDFLKNPEGQDLRLPQLVDMAAQVAEGMAYMERMNYIHRDLRAANILVGERLACKIADFGLARLIKDDEYNPCQGSKFPIKWTAPEAALFGRFTIKSDVWSFGILLTELITKGRIPYPGMNKREVLEQVEQGYHMPCPPGCPASLYEAMEQTWRLDPEERPTFEYLQSFLEDYFTSAEPQYQPGDQT</sequence>
<comment type="function">
    <text evidence="2 7 10 12 14">Non-receptor tyrosine-protein kinase that transmits signals from cell surface receptors devoid of kinase activity and contributes to the regulation of immune responses, including neutrophil, monocyte, macrophage and mast cell functions, cytoskeleton remodeling in response to extracellular stimuli, phagocytosis, cell adhesion and migration. Promotes mast cell degranulation, release of inflammatory cytokines and IgE-mediated anaphylaxis. Acts downstream of receptors that bind the Fc region of immunoglobulins, such as MS4A2/FCER1B, FCGR2A and/or FCGR2B. Acts downstream of ITGB1 and ITGB2, and regulates actin cytoskeleton reorganization, cell spreading and adhesion. Depending on the context, activates or inhibits cellular responses. Functions as a negative regulator of ITGB2 signaling, phagocytosis and SYK activity in monocytes. Required for normal ITGB1 and ITGB2 signaling, normal cell spreading and adhesion in neutrophils and macrophages. Functions as a positive regulator of cell migration and regulates cytoskeleton reorganization via RAC1 activation. Phosphorylates SYK (in vitro) and promotes SYK-dependent activation of AKT1 and MAP kinase signaling. Phosphorylates PLD2 in antigen-stimulated mast cells, leading to PLD2 activation and the production of the signaling molecules lysophosphatidic acid and diacylglycerol. Promotes activation of PIK3R1. Phosphorylates FASLG, and thereby regulates its ubiquitination and subsequent internalization. Phosphorylates ABL1. Promotes phosphorylation of CBL, CTTN, PIK3R1, PTK2/FAK1, PTK2B/PYK2 and VAV2. Phosphorylates HCLS1 that has already been phosphorylated by SYK, but not unphosphorylated HCLS1. Together with CLNK, it acts as a negative regulator of natural killer cell-activating receptors and inhibits interferon-gamma production (By similarity).</text>
</comment>
<comment type="catalytic activity">
    <reaction evidence="6 12 13 15">
        <text>L-tyrosyl-[protein] + ATP = O-phospho-L-tyrosyl-[protein] + ADP + H(+)</text>
        <dbReference type="Rhea" id="RHEA:10596"/>
        <dbReference type="Rhea" id="RHEA-COMP:10136"/>
        <dbReference type="Rhea" id="RHEA-COMP:20101"/>
        <dbReference type="ChEBI" id="CHEBI:15378"/>
        <dbReference type="ChEBI" id="CHEBI:30616"/>
        <dbReference type="ChEBI" id="CHEBI:46858"/>
        <dbReference type="ChEBI" id="CHEBI:61978"/>
        <dbReference type="ChEBI" id="CHEBI:456216"/>
        <dbReference type="EC" id="2.7.10.2"/>
    </reaction>
</comment>
<comment type="activity regulation">
    <text evidence="8 15 16">Activated by autophosphorylation. Prior phosphorylation at Tyr-523 by SRC inhibits ulterior autophosphorylation at Tyr-412. Activated by phorbol myristate acetate, phosphatidic acid and poly-Lys. Binding (via SH2 domain) of HCLS1 that is already phosphorylated by SYK strongly increases kinase activity.</text>
</comment>
<comment type="subunit">
    <text evidence="1 2">Interacts with ITGB1, ITGB2, MS4A2/FCER1B, FCER1G, FCGR2A and/or FCGR2B. Interacts (via SH2 domain) with SYK (tyrosine phosphorylated). Interacts (via SH2 domain) with FLT3 (tyrosine phosphorylated). Interacts with PTK2/FAK1. Interacts (via SH2 domain) with HCLS1 (tyrosine phosphorylated by SYK). Interacts with SIRPA and PTPNS1. Interacts (not phosphorylated on tyrosine residues) with CBL; FGR tyrosine phosphorylation promotes dissociation. Interacts with PIK3R1 and FASLG (By similarity). Interacts with CLNK (By similarity).</text>
</comment>
<comment type="interaction">
    <interactant intactId="EBI-1383732">
        <id>P09769</id>
    </interactant>
    <interactant intactId="EBI-79934">
        <id>P09917</id>
        <label>ALOX5</label>
    </interactant>
    <organismsDiffer>false</organismsDiffer>
    <experiments>2</experiments>
</comment>
<comment type="interaction">
    <interactant intactId="EBI-1383732">
        <id>P09769</id>
    </interactant>
    <interactant intactId="EBI-608057">
        <id>P10275</id>
        <label>AR</label>
    </interactant>
    <organismsDiffer>false</organismsDiffer>
    <experiments>3</experiments>
</comment>
<comment type="interaction">
    <interactant intactId="EBI-1383732">
        <id>P09769</id>
    </interactant>
    <interactant intactId="EBI-297353">
        <id>P00533</id>
        <label>EGFR</label>
    </interactant>
    <organismsDiffer>false</organismsDiffer>
    <experiments>3</experiments>
</comment>
<comment type="interaction">
    <interactant intactId="EBI-1383732">
        <id>P09769</id>
    </interactant>
    <interactant intactId="EBI-641062">
        <id>P04626</id>
        <label>ERBB2</label>
    </interactant>
    <organismsDiffer>false</organismsDiffer>
    <experiments>3</experiments>
</comment>
<comment type="interaction">
    <interactant intactId="EBI-1383732">
        <id>P09769</id>
    </interactant>
    <interactant intactId="EBI-352572">
        <id>P08238</id>
        <label>HSP90AB1</label>
    </interactant>
    <organismsDiffer>false</organismsDiffer>
    <experiments>4</experiments>
</comment>
<comment type="interaction">
    <interactant intactId="EBI-1383732">
        <id>P09769</id>
    </interactant>
    <interactant intactId="EBI-1379503">
        <id>P10721</id>
        <label>KIT</label>
    </interactant>
    <organismsDiffer>false</organismsDiffer>
    <experiments>2</experiments>
</comment>
<comment type="interaction">
    <interactant intactId="EBI-1383732">
        <id>P09769</id>
    </interactant>
    <interactant intactId="EBI-1039152">
        <id>P08581</id>
        <label>MET</label>
    </interactant>
    <organismsDiffer>false</organismsDiffer>
    <experiments>2</experiments>
</comment>
<comment type="subcellular location">
    <subcellularLocation>
        <location evidence="17">Cell membrane</location>
        <topology evidence="17">Lipid-anchor</topology>
        <orientation evidence="17">Cytoplasmic side</orientation>
    </subcellularLocation>
    <subcellularLocation>
        <location>Cell membrane</location>
        <topology>Peripheral membrane protein</topology>
        <orientation>Cytoplasmic side</orientation>
    </subcellularLocation>
    <subcellularLocation>
        <location>Cell projection</location>
        <location>Ruffle membrane</location>
    </subcellularLocation>
    <subcellularLocation>
        <location>Cytoplasm</location>
        <location>Cytosol</location>
    </subcellularLocation>
    <subcellularLocation>
        <location>Cytoplasm</location>
        <location>Cytoskeleton</location>
    </subcellularLocation>
    <subcellularLocation>
        <location evidence="1">Mitochondrion inner membrane</location>
    </subcellularLocation>
    <subcellularLocation>
        <location evidence="1">Mitochondrion intermembrane space</location>
    </subcellularLocation>
    <text evidence="1">Detected in mitochondrial intermembrane space and at inner membranes (By similarity). Colocalizes with actin fibers at membrane ruffles. Detected at plasma membrane lipid rafts.</text>
</comment>
<comment type="tissue specificity">
    <text evidence="8 13 15">Detected in neutrophils, monocytes and natural killer cells (at protein level). Detected in monocytes and large lymphocytes.</text>
</comment>
<comment type="PTM">
    <text evidence="9">Ubiquitinated. Becomes ubiquitinated in response to ITGB2 signaling; this does not lead to degradation.</text>
</comment>
<comment type="PTM">
    <text evidence="7 14">Phosphorylated. Autophosphorylated on tyrosine residues. Becomes phosphorylated in response to FCGR2A and/or FCGR2B engagement, cell adhesion and signaling by ITGB2. Prior phosphorylation at Tyr-523 by SRC inhibits ulterior autophosphorylation at Tyr-412.</text>
</comment>
<comment type="disease">
    <text>Mutations that cause aberrant kinase activation can confer oncogene activity and promote aberrant cell proliferation.</text>
</comment>
<comment type="similarity">
    <text evidence="3">Belongs to the protein kinase superfamily. Tyr protein kinase family. SRC subfamily.</text>
</comment>